<dbReference type="EC" id="2.5.1.19" evidence="2"/>
<dbReference type="EMBL" id="M21071">
    <property type="protein sequence ID" value="AAA34136.1"/>
    <property type="molecule type" value="mRNA"/>
</dbReference>
<dbReference type="PIR" id="B28198">
    <property type="entry name" value="XUTOVS"/>
</dbReference>
<dbReference type="FunCoup" id="P10748">
    <property type="interactions" value="817"/>
</dbReference>
<dbReference type="STRING" id="4081.P10748"/>
<dbReference type="PaxDb" id="4081-Solyc01g091190.2.1"/>
<dbReference type="eggNOG" id="KOG0692">
    <property type="taxonomic scope" value="Eukaryota"/>
</dbReference>
<dbReference type="InParanoid" id="P10748"/>
<dbReference type="UniPathway" id="UPA00053">
    <property type="reaction ID" value="UER00089"/>
</dbReference>
<dbReference type="Proteomes" id="UP000004994">
    <property type="component" value="Unplaced"/>
</dbReference>
<dbReference type="ExpressionAtlas" id="P10748">
    <property type="expression patterns" value="baseline and differential"/>
</dbReference>
<dbReference type="GO" id="GO:0009507">
    <property type="term" value="C:chloroplast"/>
    <property type="evidence" value="ECO:0007669"/>
    <property type="project" value="UniProtKB-SubCell"/>
</dbReference>
<dbReference type="GO" id="GO:0003866">
    <property type="term" value="F:3-phosphoshikimate 1-carboxyvinyltransferase activity"/>
    <property type="evidence" value="ECO:0000318"/>
    <property type="project" value="GO_Central"/>
</dbReference>
<dbReference type="GO" id="GO:0008652">
    <property type="term" value="P:amino acid biosynthetic process"/>
    <property type="evidence" value="ECO:0007669"/>
    <property type="project" value="UniProtKB-KW"/>
</dbReference>
<dbReference type="GO" id="GO:0009073">
    <property type="term" value="P:aromatic amino acid family biosynthetic process"/>
    <property type="evidence" value="ECO:0007669"/>
    <property type="project" value="UniProtKB-KW"/>
</dbReference>
<dbReference type="GO" id="GO:0009423">
    <property type="term" value="P:chorismate biosynthetic process"/>
    <property type="evidence" value="ECO:0000318"/>
    <property type="project" value="GO_Central"/>
</dbReference>
<dbReference type="CDD" id="cd01556">
    <property type="entry name" value="EPSP_synthase"/>
    <property type="match status" value="1"/>
</dbReference>
<dbReference type="FunFam" id="3.65.10.10:FF:000004">
    <property type="entry name" value="3-phosphoshikimate 1-carboxyvinyltransferase"/>
    <property type="match status" value="1"/>
</dbReference>
<dbReference type="FunFam" id="3.65.10.10:FF:000009">
    <property type="entry name" value="3-phosphoshikimate 1-carboxyvinyltransferase"/>
    <property type="match status" value="1"/>
</dbReference>
<dbReference type="Gene3D" id="3.65.10.10">
    <property type="entry name" value="Enolpyruvate transferase domain"/>
    <property type="match status" value="2"/>
</dbReference>
<dbReference type="HAMAP" id="MF_00210">
    <property type="entry name" value="EPSP_synth"/>
    <property type="match status" value="1"/>
</dbReference>
<dbReference type="InterPro" id="IPR001986">
    <property type="entry name" value="Enolpyruvate_Tfrase_dom"/>
</dbReference>
<dbReference type="InterPro" id="IPR036968">
    <property type="entry name" value="Enolpyruvate_Tfrase_sf"/>
</dbReference>
<dbReference type="InterPro" id="IPR006264">
    <property type="entry name" value="EPSP_synthase"/>
</dbReference>
<dbReference type="InterPro" id="IPR023193">
    <property type="entry name" value="EPSP_synthase_CS"/>
</dbReference>
<dbReference type="InterPro" id="IPR013792">
    <property type="entry name" value="RNA3'P_cycl/enolpyr_Trfase_a/b"/>
</dbReference>
<dbReference type="NCBIfam" id="TIGR01356">
    <property type="entry name" value="aroA"/>
    <property type="match status" value="1"/>
</dbReference>
<dbReference type="PANTHER" id="PTHR21090">
    <property type="entry name" value="AROM/DEHYDROQUINATE SYNTHASE"/>
    <property type="match status" value="1"/>
</dbReference>
<dbReference type="PANTHER" id="PTHR21090:SF5">
    <property type="entry name" value="PENTAFUNCTIONAL AROM POLYPEPTIDE"/>
    <property type="match status" value="1"/>
</dbReference>
<dbReference type="Pfam" id="PF00275">
    <property type="entry name" value="EPSP_synthase"/>
    <property type="match status" value="1"/>
</dbReference>
<dbReference type="SUPFAM" id="SSF55205">
    <property type="entry name" value="EPT/RTPC-like"/>
    <property type="match status" value="1"/>
</dbReference>
<dbReference type="PROSITE" id="PS00104">
    <property type="entry name" value="EPSP_SYNTHASE_1"/>
    <property type="match status" value="1"/>
</dbReference>
<dbReference type="PROSITE" id="PS00885">
    <property type="entry name" value="EPSP_SYNTHASE_2"/>
    <property type="match status" value="1"/>
</dbReference>
<keyword id="KW-0028">Amino-acid biosynthesis</keyword>
<keyword id="KW-0057">Aromatic amino acid biosynthesis</keyword>
<keyword id="KW-0150">Chloroplast</keyword>
<keyword id="KW-0934">Plastid</keyword>
<keyword id="KW-1185">Reference proteome</keyword>
<keyword id="KW-0808">Transferase</keyword>
<keyword id="KW-0809">Transit peptide</keyword>
<sequence>MAQISSMAQGIQTLSLNSSNLSKTQKGPLVSNSLFFGSKKLTQISAKSLGVFKKDSVLRVVRKSSFRISASVATAEKPHEIVLXPIKDISGTVKLPGSKSLSNRILLLAALSEGRTVVDNLLSSDDIHYMLGALKTLGLHVEDDNENQRAIVEGCGGQFPVGKKSEEEIQLFLGNAGTAMRPLTAAVTVAGGHSRYVLDGVPRMRERPIGDLVDGLKQLGAEVDCSLGTNCPPVRIVSKGGLPGGKVKLSGSISSQYLTALLMAAPLALGDVEIEIIDKLISVPYVEMTLKLMERFGVFVEHSSGWDRFLVKGGQKYKSPGKAFVEGDASSASYFLAGAAVTGGTVTVEGCGTSSLQGDVKFAEVLEKMGAEVTWTENSVTVKGPPRNSSGMKHLRAIDVNMNKMPDVAMTLAVVALFADGPTTIRDVASWRVKETERMIAICTELRKLGATVVEGSDYCIITPPEKLNVTEIDTYDDHRMAMAFSLAACADVPVTIKNPGCTRKTFPDYFEVLQKYSKH</sequence>
<reference key="1">
    <citation type="journal article" date="1988" name="J. Biol. Chem.">
        <title>Structure, expression, and evolution of the 5-enolpyruvylshikimate-3-phosphate synthase genes of petunia and tomato.</title>
        <authorList>
            <person name="Gasser C.S."/>
            <person name="Winter J.A."/>
            <person name="Hironaka C.M."/>
            <person name="Shah D.M."/>
        </authorList>
    </citation>
    <scope>NUCLEOTIDE SEQUENCE [MRNA]</scope>
</reference>
<organism>
    <name type="scientific">Solanum lycopersicum</name>
    <name type="common">Tomato</name>
    <name type="synonym">Lycopersicon esculentum</name>
    <dbReference type="NCBI Taxonomy" id="4081"/>
    <lineage>
        <taxon>Eukaryota</taxon>
        <taxon>Viridiplantae</taxon>
        <taxon>Streptophyta</taxon>
        <taxon>Embryophyta</taxon>
        <taxon>Tracheophyta</taxon>
        <taxon>Spermatophyta</taxon>
        <taxon>Magnoliopsida</taxon>
        <taxon>eudicotyledons</taxon>
        <taxon>Gunneridae</taxon>
        <taxon>Pentapetalae</taxon>
        <taxon>asterids</taxon>
        <taxon>lamiids</taxon>
        <taxon>Solanales</taxon>
        <taxon>Solanaceae</taxon>
        <taxon>Solanoideae</taxon>
        <taxon>Solaneae</taxon>
        <taxon>Solanum</taxon>
        <taxon>Solanum subgen. Lycopersicon</taxon>
    </lineage>
</organism>
<proteinExistence type="evidence at transcript level"/>
<evidence type="ECO:0000250" key="1">
    <source>
        <dbReference type="UniProtKB" id="P0A6D3"/>
    </source>
</evidence>
<evidence type="ECO:0000250" key="2">
    <source>
        <dbReference type="UniProtKB" id="P11043"/>
    </source>
</evidence>
<evidence type="ECO:0000250" key="3">
    <source>
        <dbReference type="UniProtKB" id="P9WPY5"/>
    </source>
</evidence>
<evidence type="ECO:0000255" key="4"/>
<evidence type="ECO:0000305" key="5"/>
<feature type="transit peptide" description="Chloroplast" evidence="4">
    <location>
        <begin position="1"/>
        <end position="76"/>
    </location>
</feature>
<feature type="chain" id="PRO_0000002289" description="3-phosphoshikimate 1-carboxyvinyltransferase, chloroplastic">
    <location>
        <begin position="77"/>
        <end position="520"/>
    </location>
</feature>
<feature type="active site" description="Proton acceptor" evidence="1">
    <location>
        <position position="407"/>
    </location>
</feature>
<feature type="binding site" evidence="1">
    <location>
        <position position="99"/>
    </location>
    <ligand>
        <name>3-phosphoshikimate</name>
        <dbReference type="ChEBI" id="CHEBI:145989"/>
    </ligand>
</feature>
<feature type="binding site" evidence="3">
    <location>
        <position position="99"/>
    </location>
    <ligand>
        <name>phosphoenolpyruvate</name>
        <dbReference type="ChEBI" id="CHEBI:58702"/>
    </ligand>
</feature>
<feature type="binding site" evidence="1">
    <location>
        <position position="100"/>
    </location>
    <ligand>
        <name>3-phosphoshikimate</name>
        <dbReference type="ChEBI" id="CHEBI:145989"/>
    </ligand>
</feature>
<feature type="binding site" evidence="1">
    <location>
        <position position="104"/>
    </location>
    <ligand>
        <name>3-phosphoshikimate</name>
        <dbReference type="ChEBI" id="CHEBI:145989"/>
    </ligand>
</feature>
<feature type="binding site" evidence="3">
    <location>
        <position position="177"/>
    </location>
    <ligand>
        <name>phosphoenolpyruvate</name>
        <dbReference type="ChEBI" id="CHEBI:58702"/>
    </ligand>
</feature>
<feature type="binding site" evidence="3">
    <location>
        <position position="207"/>
    </location>
    <ligand>
        <name>phosphoenolpyruvate</name>
        <dbReference type="ChEBI" id="CHEBI:58702"/>
    </ligand>
</feature>
<feature type="binding site" evidence="1">
    <location>
        <position position="254"/>
    </location>
    <ligand>
        <name>3-phosphoshikimate</name>
        <dbReference type="ChEBI" id="CHEBI:145989"/>
    </ligand>
</feature>
<feature type="binding site" evidence="1">
    <location>
        <position position="255"/>
    </location>
    <ligand>
        <name>3-phosphoshikimate</name>
        <dbReference type="ChEBI" id="CHEBI:145989"/>
    </ligand>
</feature>
<feature type="binding site" evidence="1">
    <location>
        <position position="256"/>
    </location>
    <ligand>
        <name>3-phosphoshikimate</name>
        <dbReference type="ChEBI" id="CHEBI:145989"/>
    </ligand>
</feature>
<feature type="binding site" evidence="3">
    <location>
        <position position="256"/>
    </location>
    <ligand>
        <name>phosphoenolpyruvate</name>
        <dbReference type="ChEBI" id="CHEBI:58702"/>
    </ligand>
</feature>
<feature type="binding site" evidence="1">
    <location>
        <position position="282"/>
    </location>
    <ligand>
        <name>3-phosphoshikimate</name>
        <dbReference type="ChEBI" id="CHEBI:145989"/>
    </ligand>
</feature>
<feature type="binding site" evidence="1">
    <location>
        <position position="407"/>
    </location>
    <ligand>
        <name>3-phosphoshikimate</name>
        <dbReference type="ChEBI" id="CHEBI:145989"/>
    </ligand>
</feature>
<feature type="binding site" evidence="1">
    <location>
        <position position="434"/>
    </location>
    <ligand>
        <name>3-phosphoshikimate</name>
        <dbReference type="ChEBI" id="CHEBI:145989"/>
    </ligand>
</feature>
<feature type="binding site" evidence="3">
    <location>
        <position position="438"/>
    </location>
    <ligand>
        <name>phosphoenolpyruvate</name>
        <dbReference type="ChEBI" id="CHEBI:58702"/>
    </ligand>
</feature>
<feature type="binding site" evidence="3">
    <location>
        <position position="480"/>
    </location>
    <ligand>
        <name>phosphoenolpyruvate</name>
        <dbReference type="ChEBI" id="CHEBI:58702"/>
    </ligand>
</feature>
<feature type="binding site" evidence="3">
    <location>
        <position position="505"/>
    </location>
    <ligand>
        <name>phosphoenolpyruvate</name>
        <dbReference type="ChEBI" id="CHEBI:58702"/>
    </ligand>
</feature>
<comment type="function">
    <text evidence="2">Catalyzes the transfer of the enolpyruvyl moiety of phosphoenolpyruvate (PEP) to the 5-hydroxyl of shikimate-3-phosphate (S3P) to produce enolpyruvyl shikimate-3-phosphate and inorganic phosphate.</text>
</comment>
<comment type="catalytic activity">
    <reaction evidence="2">
        <text>3-phosphoshikimate + phosphoenolpyruvate = 5-O-(1-carboxyvinyl)-3-phosphoshikimate + phosphate</text>
        <dbReference type="Rhea" id="RHEA:21256"/>
        <dbReference type="ChEBI" id="CHEBI:43474"/>
        <dbReference type="ChEBI" id="CHEBI:57701"/>
        <dbReference type="ChEBI" id="CHEBI:58702"/>
        <dbReference type="ChEBI" id="CHEBI:145989"/>
        <dbReference type="EC" id="2.5.1.19"/>
    </reaction>
    <physiologicalReaction direction="left-to-right" evidence="2">
        <dbReference type="Rhea" id="RHEA:21257"/>
    </physiologicalReaction>
</comment>
<comment type="pathway">
    <text evidence="2">Metabolic intermediate biosynthesis; chorismate biosynthesis; chorismate from D-erythrose 4-phosphate and phosphoenolpyruvate: step 6/7.</text>
</comment>
<comment type="subcellular location">
    <subcellularLocation>
        <location>Plastid</location>
        <location>Chloroplast</location>
    </subcellularLocation>
</comment>
<comment type="miscellaneous">
    <text>This enzyme is the target of the potent, broad-spectrum herbicide, glyphosate [n-(phosphonomethyl)glycine]. Overproduction of EPSP leads to glyphosate tolerance.</text>
</comment>
<comment type="similarity">
    <text evidence="5">Belongs to the EPSP synthase family.</text>
</comment>
<name>AROA_SOLLC</name>
<protein>
    <recommendedName>
        <fullName>3-phosphoshikimate 1-carboxyvinyltransferase, chloroplastic</fullName>
        <ecNumber evidence="2">2.5.1.19</ecNumber>
    </recommendedName>
    <alternativeName>
        <fullName>5-enolpyruvylshikimate-3-phosphate synthase</fullName>
        <shortName>EPSP synthase</shortName>
    </alternativeName>
</protein>
<accession>P10748</accession>